<accession>Q12X18</accession>
<gene>
    <name evidence="1" type="primary">aroA</name>
    <name type="ordered locus">Mbur_1078</name>
</gene>
<feature type="chain" id="PRO_1000012450" description="3-phosphoshikimate 1-carboxyvinyltransferase">
    <location>
        <begin position="1"/>
        <end position="427"/>
    </location>
</feature>
<feature type="active site" description="Proton acceptor" evidence="1">
    <location>
        <position position="309"/>
    </location>
</feature>
<feature type="binding site" evidence="1">
    <location>
        <position position="20"/>
    </location>
    <ligand>
        <name>3-phosphoshikimate</name>
        <dbReference type="ChEBI" id="CHEBI:145989"/>
    </ligand>
</feature>
<feature type="binding site" evidence="1">
    <location>
        <position position="20"/>
    </location>
    <ligand>
        <name>phosphoenolpyruvate</name>
        <dbReference type="ChEBI" id="CHEBI:58702"/>
    </ligand>
</feature>
<feature type="binding site" evidence="1">
    <location>
        <position position="21"/>
    </location>
    <ligand>
        <name>3-phosphoshikimate</name>
        <dbReference type="ChEBI" id="CHEBI:145989"/>
    </ligand>
</feature>
<feature type="binding site" evidence="1">
    <location>
        <position position="25"/>
    </location>
    <ligand>
        <name>3-phosphoshikimate</name>
        <dbReference type="ChEBI" id="CHEBI:145989"/>
    </ligand>
</feature>
<feature type="binding site" evidence="1">
    <location>
        <position position="90"/>
    </location>
    <ligand>
        <name>phosphoenolpyruvate</name>
        <dbReference type="ChEBI" id="CHEBI:58702"/>
    </ligand>
</feature>
<feature type="binding site" evidence="1">
    <location>
        <position position="118"/>
    </location>
    <ligand>
        <name>phosphoenolpyruvate</name>
        <dbReference type="ChEBI" id="CHEBI:58702"/>
    </ligand>
</feature>
<feature type="binding site" evidence="1">
    <location>
        <position position="163"/>
    </location>
    <ligand>
        <name>3-phosphoshikimate</name>
        <dbReference type="ChEBI" id="CHEBI:145989"/>
    </ligand>
</feature>
<feature type="binding site" evidence="1">
    <location>
        <position position="164"/>
    </location>
    <ligand>
        <name>3-phosphoshikimate</name>
        <dbReference type="ChEBI" id="CHEBI:145989"/>
    </ligand>
</feature>
<feature type="binding site" evidence="1">
    <location>
        <position position="165"/>
    </location>
    <ligand>
        <name>3-phosphoshikimate</name>
        <dbReference type="ChEBI" id="CHEBI:145989"/>
    </ligand>
</feature>
<feature type="binding site" evidence="1">
    <location>
        <position position="165"/>
    </location>
    <ligand>
        <name>phosphoenolpyruvate</name>
        <dbReference type="ChEBI" id="CHEBI:58702"/>
    </ligand>
</feature>
<feature type="binding site" evidence="1">
    <location>
        <position position="191"/>
    </location>
    <ligand>
        <name>3-phosphoshikimate</name>
        <dbReference type="ChEBI" id="CHEBI:145989"/>
    </ligand>
</feature>
<feature type="binding site" evidence="1">
    <location>
        <position position="309"/>
    </location>
    <ligand>
        <name>3-phosphoshikimate</name>
        <dbReference type="ChEBI" id="CHEBI:145989"/>
    </ligand>
</feature>
<feature type="binding site" evidence="1">
    <location>
        <position position="336"/>
    </location>
    <ligand>
        <name>3-phosphoshikimate</name>
        <dbReference type="ChEBI" id="CHEBI:145989"/>
    </ligand>
</feature>
<feature type="binding site" evidence="1">
    <location>
        <position position="340"/>
    </location>
    <ligand>
        <name>phosphoenolpyruvate</name>
        <dbReference type="ChEBI" id="CHEBI:58702"/>
    </ligand>
</feature>
<feature type="binding site" evidence="1">
    <location>
        <position position="381"/>
    </location>
    <ligand>
        <name>phosphoenolpyruvate</name>
        <dbReference type="ChEBI" id="CHEBI:58702"/>
    </ligand>
</feature>
<keyword id="KW-0028">Amino-acid biosynthesis</keyword>
<keyword id="KW-0057">Aromatic amino acid biosynthesis</keyword>
<keyword id="KW-0963">Cytoplasm</keyword>
<keyword id="KW-0808">Transferase</keyword>
<evidence type="ECO:0000255" key="1">
    <source>
        <dbReference type="HAMAP-Rule" id="MF_00210"/>
    </source>
</evidence>
<name>AROA_METBU</name>
<proteinExistence type="inferred from homology"/>
<sequence length="427" mass="45424">MKVTVGRSGVHGEIFAPASKSYTHRAITVAALSKESIIHRPLISADTQSTIKACEMLGAYIEKDGDKLLISGVDGEPQTPDNVIDVGNSGTTLRFMTAIAALGQGTTVLTGDNSIRSRPNGPLLQVLNDLGVQSISTRGDGCAPIVVTGGLKGAIAKIDGSISSQFISALLLACPLTKNSTTLSIKGELKSRPYVDVTLDILEKAGAEIYLEDNQNLKFIIPGNQKYRLKEYTVPGDFSSASYLLAAAAMTDTKIKVNNLYPSMQGDAAIIDILKEMGANIYWNKEEGTVEVNGGKLHGITMDAGATPDLVPTVAVLGAVAEGETVITNAEHVRYKETDRLHAMAVELDKMGISTSEEKDKLTIKGGELKGADVHGWHDHRIVMSLTLAGMIAGDTTIDTAEAIFISYPNFFDSMRSIGADVILSEQ</sequence>
<organism>
    <name type="scientific">Methanococcoides burtonii (strain DSM 6242 / NBRC 107633 / OCM 468 / ACE-M)</name>
    <dbReference type="NCBI Taxonomy" id="259564"/>
    <lineage>
        <taxon>Archaea</taxon>
        <taxon>Methanobacteriati</taxon>
        <taxon>Methanobacteriota</taxon>
        <taxon>Stenosarchaea group</taxon>
        <taxon>Methanomicrobia</taxon>
        <taxon>Methanosarcinales</taxon>
        <taxon>Methanosarcinaceae</taxon>
        <taxon>Methanococcoides</taxon>
    </lineage>
</organism>
<reference key="1">
    <citation type="journal article" date="2009" name="ISME J.">
        <title>The genome sequence of the psychrophilic archaeon, Methanococcoides burtonii: the role of genome evolution in cold adaptation.</title>
        <authorList>
            <person name="Allen M.A."/>
            <person name="Lauro F.M."/>
            <person name="Williams T.J."/>
            <person name="Burg D."/>
            <person name="Siddiqui K.S."/>
            <person name="De Francisci D."/>
            <person name="Chong K.W."/>
            <person name="Pilak O."/>
            <person name="Chew H.H."/>
            <person name="De Maere M.Z."/>
            <person name="Ting L."/>
            <person name="Katrib M."/>
            <person name="Ng C."/>
            <person name="Sowers K.R."/>
            <person name="Galperin M.Y."/>
            <person name="Anderson I.J."/>
            <person name="Ivanova N."/>
            <person name="Dalin E."/>
            <person name="Martinez M."/>
            <person name="Lapidus A."/>
            <person name="Hauser L."/>
            <person name="Land M."/>
            <person name="Thomas T."/>
            <person name="Cavicchioli R."/>
        </authorList>
    </citation>
    <scope>NUCLEOTIDE SEQUENCE [LARGE SCALE GENOMIC DNA]</scope>
    <source>
        <strain>DSM 6242 / NBRC 107633 / OCM 468 / ACE-M</strain>
    </source>
</reference>
<comment type="function">
    <text evidence="1">Catalyzes the transfer of the enolpyruvyl moiety of phosphoenolpyruvate (PEP) to the 5-hydroxyl of shikimate-3-phosphate (S3P) to produce enolpyruvyl shikimate-3-phosphate and inorganic phosphate.</text>
</comment>
<comment type="catalytic activity">
    <reaction evidence="1">
        <text>3-phosphoshikimate + phosphoenolpyruvate = 5-O-(1-carboxyvinyl)-3-phosphoshikimate + phosphate</text>
        <dbReference type="Rhea" id="RHEA:21256"/>
        <dbReference type="ChEBI" id="CHEBI:43474"/>
        <dbReference type="ChEBI" id="CHEBI:57701"/>
        <dbReference type="ChEBI" id="CHEBI:58702"/>
        <dbReference type="ChEBI" id="CHEBI:145989"/>
        <dbReference type="EC" id="2.5.1.19"/>
    </reaction>
    <physiologicalReaction direction="left-to-right" evidence="1">
        <dbReference type="Rhea" id="RHEA:21257"/>
    </physiologicalReaction>
</comment>
<comment type="pathway">
    <text evidence="1">Metabolic intermediate biosynthesis; chorismate biosynthesis.</text>
</comment>
<comment type="subunit">
    <text evidence="1">Monomer.</text>
</comment>
<comment type="subcellular location">
    <subcellularLocation>
        <location evidence="1">Cytoplasm</location>
    </subcellularLocation>
</comment>
<comment type="similarity">
    <text evidence="1">Belongs to the EPSP synthase family.</text>
</comment>
<dbReference type="EC" id="2.5.1.19" evidence="1"/>
<dbReference type="EMBL" id="CP000300">
    <property type="protein sequence ID" value="ABE52008.1"/>
    <property type="molecule type" value="Genomic_DNA"/>
</dbReference>
<dbReference type="RefSeq" id="WP_011499156.1">
    <property type="nucleotide sequence ID" value="NC_007955.1"/>
</dbReference>
<dbReference type="SMR" id="Q12X18"/>
<dbReference type="STRING" id="259564.Mbur_1078"/>
<dbReference type="GeneID" id="3998015"/>
<dbReference type="KEGG" id="mbu:Mbur_1078"/>
<dbReference type="HOGENOM" id="CLU_024321_0_0_2"/>
<dbReference type="OrthoDB" id="43788at2157"/>
<dbReference type="UniPathway" id="UPA00053"/>
<dbReference type="Proteomes" id="UP000001979">
    <property type="component" value="Chromosome"/>
</dbReference>
<dbReference type="GO" id="GO:0005737">
    <property type="term" value="C:cytoplasm"/>
    <property type="evidence" value="ECO:0007669"/>
    <property type="project" value="UniProtKB-SubCell"/>
</dbReference>
<dbReference type="GO" id="GO:0003866">
    <property type="term" value="F:3-phosphoshikimate 1-carboxyvinyltransferase activity"/>
    <property type="evidence" value="ECO:0007669"/>
    <property type="project" value="UniProtKB-UniRule"/>
</dbReference>
<dbReference type="GO" id="GO:0008652">
    <property type="term" value="P:amino acid biosynthetic process"/>
    <property type="evidence" value="ECO:0007669"/>
    <property type="project" value="UniProtKB-KW"/>
</dbReference>
<dbReference type="GO" id="GO:0009073">
    <property type="term" value="P:aromatic amino acid family biosynthetic process"/>
    <property type="evidence" value="ECO:0007669"/>
    <property type="project" value="UniProtKB-KW"/>
</dbReference>
<dbReference type="GO" id="GO:0009423">
    <property type="term" value="P:chorismate biosynthetic process"/>
    <property type="evidence" value="ECO:0007669"/>
    <property type="project" value="UniProtKB-UniRule"/>
</dbReference>
<dbReference type="CDD" id="cd01556">
    <property type="entry name" value="EPSP_synthase"/>
    <property type="match status" value="1"/>
</dbReference>
<dbReference type="FunFam" id="3.65.10.10:FF:000012">
    <property type="entry name" value="Pentafunctional AROM polypeptide"/>
    <property type="match status" value="1"/>
</dbReference>
<dbReference type="Gene3D" id="3.65.10.10">
    <property type="entry name" value="Enolpyruvate transferase domain"/>
    <property type="match status" value="2"/>
</dbReference>
<dbReference type="HAMAP" id="MF_00210">
    <property type="entry name" value="EPSP_synth"/>
    <property type="match status" value="1"/>
</dbReference>
<dbReference type="InterPro" id="IPR001986">
    <property type="entry name" value="Enolpyruvate_Tfrase_dom"/>
</dbReference>
<dbReference type="InterPro" id="IPR036968">
    <property type="entry name" value="Enolpyruvate_Tfrase_sf"/>
</dbReference>
<dbReference type="InterPro" id="IPR006264">
    <property type="entry name" value="EPSP_synthase"/>
</dbReference>
<dbReference type="InterPro" id="IPR023193">
    <property type="entry name" value="EPSP_synthase_CS"/>
</dbReference>
<dbReference type="InterPro" id="IPR013792">
    <property type="entry name" value="RNA3'P_cycl/enolpyr_Trfase_a/b"/>
</dbReference>
<dbReference type="NCBIfam" id="TIGR01356">
    <property type="entry name" value="aroA"/>
    <property type="match status" value="1"/>
</dbReference>
<dbReference type="PANTHER" id="PTHR21090">
    <property type="entry name" value="AROM/DEHYDROQUINATE SYNTHASE"/>
    <property type="match status" value="1"/>
</dbReference>
<dbReference type="PANTHER" id="PTHR21090:SF5">
    <property type="entry name" value="PENTAFUNCTIONAL AROM POLYPEPTIDE"/>
    <property type="match status" value="1"/>
</dbReference>
<dbReference type="Pfam" id="PF00275">
    <property type="entry name" value="EPSP_synthase"/>
    <property type="match status" value="1"/>
</dbReference>
<dbReference type="PIRSF" id="PIRSF000505">
    <property type="entry name" value="EPSPS"/>
    <property type="match status" value="1"/>
</dbReference>
<dbReference type="SUPFAM" id="SSF55205">
    <property type="entry name" value="EPT/RTPC-like"/>
    <property type="match status" value="1"/>
</dbReference>
<dbReference type="PROSITE" id="PS00104">
    <property type="entry name" value="EPSP_SYNTHASE_1"/>
    <property type="match status" value="1"/>
</dbReference>
<dbReference type="PROSITE" id="PS00885">
    <property type="entry name" value="EPSP_SYNTHASE_2"/>
    <property type="match status" value="1"/>
</dbReference>
<protein>
    <recommendedName>
        <fullName evidence="1">3-phosphoshikimate 1-carboxyvinyltransferase</fullName>
        <ecNumber evidence="1">2.5.1.19</ecNumber>
    </recommendedName>
    <alternativeName>
        <fullName evidence="1">5-enolpyruvylshikimate-3-phosphate synthase</fullName>
        <shortName evidence="1">EPSP synthase</shortName>
        <shortName evidence="1">EPSPS</shortName>
    </alternativeName>
</protein>